<reference key="1">
    <citation type="journal article" date="2000" name="Nature">
        <title>Sequence and analysis of chromosome 5 of the plant Arabidopsis thaliana.</title>
        <authorList>
            <person name="Tabata S."/>
            <person name="Kaneko T."/>
            <person name="Nakamura Y."/>
            <person name="Kotani H."/>
            <person name="Kato T."/>
            <person name="Asamizu E."/>
            <person name="Miyajima N."/>
            <person name="Sasamoto S."/>
            <person name="Kimura T."/>
            <person name="Hosouchi T."/>
            <person name="Kawashima K."/>
            <person name="Kohara M."/>
            <person name="Matsumoto M."/>
            <person name="Matsuno A."/>
            <person name="Muraki A."/>
            <person name="Nakayama S."/>
            <person name="Nakazaki N."/>
            <person name="Naruo K."/>
            <person name="Okumura S."/>
            <person name="Shinpo S."/>
            <person name="Takeuchi C."/>
            <person name="Wada T."/>
            <person name="Watanabe A."/>
            <person name="Yamada M."/>
            <person name="Yasuda M."/>
            <person name="Sato S."/>
            <person name="de la Bastide M."/>
            <person name="Huang E."/>
            <person name="Spiegel L."/>
            <person name="Gnoj L."/>
            <person name="O'Shaughnessy A."/>
            <person name="Preston R."/>
            <person name="Habermann K."/>
            <person name="Murray J."/>
            <person name="Johnson D."/>
            <person name="Rohlfing T."/>
            <person name="Nelson J."/>
            <person name="Stoneking T."/>
            <person name="Pepin K."/>
            <person name="Spieth J."/>
            <person name="Sekhon M."/>
            <person name="Armstrong J."/>
            <person name="Becker M."/>
            <person name="Belter E."/>
            <person name="Cordum H."/>
            <person name="Cordes M."/>
            <person name="Courtney L."/>
            <person name="Courtney W."/>
            <person name="Dante M."/>
            <person name="Du H."/>
            <person name="Edwards J."/>
            <person name="Fryman J."/>
            <person name="Haakensen B."/>
            <person name="Lamar E."/>
            <person name="Latreille P."/>
            <person name="Leonard S."/>
            <person name="Meyer R."/>
            <person name="Mulvaney E."/>
            <person name="Ozersky P."/>
            <person name="Riley A."/>
            <person name="Strowmatt C."/>
            <person name="Wagner-McPherson C."/>
            <person name="Wollam A."/>
            <person name="Yoakum M."/>
            <person name="Bell M."/>
            <person name="Dedhia N."/>
            <person name="Parnell L."/>
            <person name="Shah R."/>
            <person name="Rodriguez M."/>
            <person name="Hoon See L."/>
            <person name="Vil D."/>
            <person name="Baker J."/>
            <person name="Kirchoff K."/>
            <person name="Toth K."/>
            <person name="King L."/>
            <person name="Bahret A."/>
            <person name="Miller B."/>
            <person name="Marra M.A."/>
            <person name="Martienssen R."/>
            <person name="McCombie W.R."/>
            <person name="Wilson R.K."/>
            <person name="Murphy G."/>
            <person name="Bancroft I."/>
            <person name="Volckaert G."/>
            <person name="Wambutt R."/>
            <person name="Duesterhoeft A."/>
            <person name="Stiekema W."/>
            <person name="Pohl T."/>
            <person name="Entian K.-D."/>
            <person name="Terryn N."/>
            <person name="Hartley N."/>
            <person name="Bent E."/>
            <person name="Johnson S."/>
            <person name="Langham S.-A."/>
            <person name="McCullagh B."/>
            <person name="Robben J."/>
            <person name="Grymonprez B."/>
            <person name="Zimmermann W."/>
            <person name="Ramsperger U."/>
            <person name="Wedler H."/>
            <person name="Balke K."/>
            <person name="Wedler E."/>
            <person name="Peters S."/>
            <person name="van Staveren M."/>
            <person name="Dirkse W."/>
            <person name="Mooijman P."/>
            <person name="Klein Lankhorst R."/>
            <person name="Weitzenegger T."/>
            <person name="Bothe G."/>
            <person name="Rose M."/>
            <person name="Hauf J."/>
            <person name="Berneiser S."/>
            <person name="Hempel S."/>
            <person name="Feldpausch M."/>
            <person name="Lamberth S."/>
            <person name="Villarroel R."/>
            <person name="Gielen J."/>
            <person name="Ardiles W."/>
            <person name="Bents O."/>
            <person name="Lemcke K."/>
            <person name="Kolesov G."/>
            <person name="Mayer K.F.X."/>
            <person name="Rudd S."/>
            <person name="Schoof H."/>
            <person name="Schueller C."/>
            <person name="Zaccaria P."/>
            <person name="Mewes H.-W."/>
            <person name="Bevan M."/>
            <person name="Fransz P.F."/>
        </authorList>
    </citation>
    <scope>NUCLEOTIDE SEQUENCE [LARGE SCALE GENOMIC DNA]</scope>
    <source>
        <strain>cv. Columbia</strain>
    </source>
</reference>
<reference key="2">
    <citation type="journal article" date="2017" name="Plant J.">
        <title>Araport11: a complete reannotation of the Arabidopsis thaliana reference genome.</title>
        <authorList>
            <person name="Cheng C.Y."/>
            <person name="Krishnakumar V."/>
            <person name="Chan A.P."/>
            <person name="Thibaud-Nissen F."/>
            <person name="Schobel S."/>
            <person name="Town C.D."/>
        </authorList>
    </citation>
    <scope>GENOME REANNOTATION</scope>
    <source>
        <strain>cv. Columbia</strain>
    </source>
</reference>
<reference key="3">
    <citation type="journal article" date="2003" name="Science">
        <title>Empirical analysis of transcriptional activity in the Arabidopsis genome.</title>
        <authorList>
            <person name="Yamada K."/>
            <person name="Lim J."/>
            <person name="Dale J.M."/>
            <person name="Chen H."/>
            <person name="Shinn P."/>
            <person name="Palm C.J."/>
            <person name="Southwick A.M."/>
            <person name="Wu H.C."/>
            <person name="Kim C.J."/>
            <person name="Nguyen M."/>
            <person name="Pham P.K."/>
            <person name="Cheuk R.F."/>
            <person name="Karlin-Newmann G."/>
            <person name="Liu S.X."/>
            <person name="Lam B."/>
            <person name="Sakano H."/>
            <person name="Wu T."/>
            <person name="Yu G."/>
            <person name="Miranda M."/>
            <person name="Quach H.L."/>
            <person name="Tripp M."/>
            <person name="Chang C.H."/>
            <person name="Lee J.M."/>
            <person name="Toriumi M.J."/>
            <person name="Chan M.M."/>
            <person name="Tang C.C."/>
            <person name="Onodera C.S."/>
            <person name="Deng J.M."/>
            <person name="Akiyama K."/>
            <person name="Ansari Y."/>
            <person name="Arakawa T."/>
            <person name="Banh J."/>
            <person name="Banno F."/>
            <person name="Bowser L."/>
            <person name="Brooks S.Y."/>
            <person name="Carninci P."/>
            <person name="Chao Q."/>
            <person name="Choy N."/>
            <person name="Enju A."/>
            <person name="Goldsmith A.D."/>
            <person name="Gurjal M."/>
            <person name="Hansen N.F."/>
            <person name="Hayashizaki Y."/>
            <person name="Johnson-Hopson C."/>
            <person name="Hsuan V.W."/>
            <person name="Iida K."/>
            <person name="Karnes M."/>
            <person name="Khan S."/>
            <person name="Koesema E."/>
            <person name="Ishida J."/>
            <person name="Jiang P.X."/>
            <person name="Jones T."/>
            <person name="Kawai J."/>
            <person name="Kamiya A."/>
            <person name="Meyers C."/>
            <person name="Nakajima M."/>
            <person name="Narusaka M."/>
            <person name="Seki M."/>
            <person name="Sakurai T."/>
            <person name="Satou M."/>
            <person name="Tamse R."/>
            <person name="Vaysberg M."/>
            <person name="Wallender E.K."/>
            <person name="Wong C."/>
            <person name="Yamamura Y."/>
            <person name="Yuan S."/>
            <person name="Shinozaki K."/>
            <person name="Davis R.W."/>
            <person name="Theologis A."/>
            <person name="Ecker J.R."/>
        </authorList>
    </citation>
    <scope>NUCLEOTIDE SEQUENCE [LARGE SCALE MRNA]</scope>
    <source>
        <strain>cv. Columbia</strain>
    </source>
</reference>
<sequence length="345" mass="37489">MPYEKELAAAKKAVSLAARLSQEVQKSLLQSDVRSKSDKSPVTAADYGSQAVISHVLERELHPEPLYLVAEENAEDLHKNGAEEFLESITKLVNNALASDDSYANSSLSMDDVRKAIDHGRSQGGSSGRHWILDPVDGTRGFVKGEEYAVALALLVEGKVVLGVMACPKLENHKSSSSGCLFFATVGEGAYVQSLEGDSHPPQKVQVSNIENPEEATFVESSHKPIPIHSSIANKLGIKAPPLRIHSQVKYAALARGDAEIYLRFTLKGYREFIWNHAAGAIITTEAGGVVCDADGNPLDFSRGNHLEHKTGIVVSTKNLMPRLLKAIRESIEEEMLLSETQLKL</sequence>
<proteinExistence type="evidence at transcript level"/>
<keyword id="KW-0378">Hydrolase</keyword>
<keyword id="KW-0460">Magnesium</keyword>
<keyword id="KW-0479">Metal-binding</keyword>
<keyword id="KW-0511">Multifunctional enzyme</keyword>
<keyword id="KW-1185">Reference proteome</keyword>
<organism>
    <name type="scientific">Arabidopsis thaliana</name>
    <name type="common">Mouse-ear cress</name>
    <dbReference type="NCBI Taxonomy" id="3702"/>
    <lineage>
        <taxon>Eukaryota</taxon>
        <taxon>Viridiplantae</taxon>
        <taxon>Streptophyta</taxon>
        <taxon>Embryophyta</taxon>
        <taxon>Tracheophyta</taxon>
        <taxon>Spermatophyta</taxon>
        <taxon>Magnoliopsida</taxon>
        <taxon>eudicotyledons</taxon>
        <taxon>Gunneridae</taxon>
        <taxon>Pentapetalae</taxon>
        <taxon>rosids</taxon>
        <taxon>malvids</taxon>
        <taxon>Brassicales</taxon>
        <taxon>Brassicaceae</taxon>
        <taxon>Camelineae</taxon>
        <taxon>Arabidopsis</taxon>
    </lineage>
</organism>
<feature type="chain" id="PRO_0000142533" description="Probable 3'(2'),5'-bisphosphate nucleotidase 4">
    <location>
        <begin position="1"/>
        <end position="345"/>
    </location>
</feature>
<feature type="active site" description="Proton acceptor" evidence="1">
    <location>
        <position position="46"/>
    </location>
</feature>
<feature type="active site" description="Proton acceptor" evidence="1">
    <location>
        <position position="139"/>
    </location>
</feature>
<feature type="binding site" evidence="1">
    <location>
        <position position="71"/>
    </location>
    <ligand>
        <name>Mg(2+)</name>
        <dbReference type="ChEBI" id="CHEBI:18420"/>
        <label>1</label>
    </ligand>
</feature>
<feature type="binding site" evidence="1">
    <location>
        <position position="71"/>
    </location>
    <ligand>
        <name>Mg(2+)</name>
        <dbReference type="ChEBI" id="CHEBI:18420"/>
        <label>3</label>
    </ligand>
</feature>
<feature type="binding site" evidence="1">
    <location>
        <position position="134"/>
    </location>
    <ligand>
        <name>Mg(2+)</name>
        <dbReference type="ChEBI" id="CHEBI:18420"/>
        <label>1</label>
    </ligand>
</feature>
<feature type="binding site" evidence="1">
    <location>
        <position position="134"/>
    </location>
    <ligand>
        <name>Mg(2+)</name>
        <dbReference type="ChEBI" id="CHEBI:18420"/>
        <label>2</label>
    </ligand>
</feature>
<feature type="binding site" evidence="1">
    <location>
        <position position="136"/>
    </location>
    <ligand>
        <name>Mg(2+)</name>
        <dbReference type="ChEBI" id="CHEBI:18420"/>
        <label>1</label>
    </ligand>
</feature>
<feature type="binding site" evidence="1">
    <location>
        <position position="137"/>
    </location>
    <ligand>
        <name>Mg(2+)</name>
        <dbReference type="ChEBI" id="CHEBI:18420"/>
        <label>2</label>
    </ligand>
</feature>
<feature type="binding site" evidence="1">
    <location>
        <position position="139"/>
    </location>
    <ligand>
        <name>adenosine 3',5'-bisphosphate</name>
        <dbReference type="ChEBI" id="CHEBI:58343"/>
    </ligand>
</feature>
<feature type="binding site" evidence="1">
    <location>
        <position position="247"/>
    </location>
    <ligand>
        <name>adenosine 3',5'-bisphosphate</name>
        <dbReference type="ChEBI" id="CHEBI:58343"/>
    </ligand>
</feature>
<feature type="binding site" evidence="1">
    <location>
        <position position="247"/>
    </location>
    <ligand>
        <name>AMP</name>
        <dbReference type="ChEBI" id="CHEBI:456215"/>
    </ligand>
</feature>
<feature type="binding site" evidence="1">
    <location>
        <position position="250"/>
    </location>
    <ligand>
        <name>adenosine 3',5'-bisphosphate</name>
        <dbReference type="ChEBI" id="CHEBI:58343"/>
    </ligand>
</feature>
<feature type="binding site" evidence="1">
    <location>
        <position position="250"/>
    </location>
    <ligand>
        <name>AMP</name>
        <dbReference type="ChEBI" id="CHEBI:456215"/>
    </ligand>
</feature>
<feature type="binding site" evidence="1">
    <location>
        <position position="264"/>
    </location>
    <ligand>
        <name>adenosine 3',5'-bisphosphate</name>
        <dbReference type="ChEBI" id="CHEBI:58343"/>
    </ligand>
</feature>
<feature type="binding site" evidence="1">
    <location>
        <position position="264"/>
    </location>
    <ligand>
        <name>AMP</name>
        <dbReference type="ChEBI" id="CHEBI:456215"/>
    </ligand>
</feature>
<comment type="function">
    <text evidence="2">Phosphatase that converts adenosine 3'-phosphate 5'-phosphosulfate (PAPS) to adenosine 5'-phosphosulfate (APS) and 3'(2')-phosphoadenosine 5'-phosphate (PAP) to AMP. Is also able to hydrolyze inositol 1,4-bisphosphate and inositol 1,3,4-trisphosphate.</text>
</comment>
<comment type="catalytic activity">
    <reaction evidence="2">
        <text>3'-phosphoadenylyl sulfate + H2O = adenosine 5'-phosphosulfate + phosphate</text>
        <dbReference type="Rhea" id="RHEA:77639"/>
        <dbReference type="ChEBI" id="CHEBI:15377"/>
        <dbReference type="ChEBI" id="CHEBI:43474"/>
        <dbReference type="ChEBI" id="CHEBI:58243"/>
        <dbReference type="ChEBI" id="CHEBI:58339"/>
        <dbReference type="EC" id="3.1.3.7"/>
    </reaction>
    <physiologicalReaction direction="left-to-right" evidence="2">
        <dbReference type="Rhea" id="RHEA:77640"/>
    </physiologicalReaction>
</comment>
<comment type="catalytic activity">
    <reaction evidence="2">
        <text>adenosine 3',5'-bisphosphate + H2O = AMP + phosphate</text>
        <dbReference type="Rhea" id="RHEA:10040"/>
        <dbReference type="ChEBI" id="CHEBI:15377"/>
        <dbReference type="ChEBI" id="CHEBI:43474"/>
        <dbReference type="ChEBI" id="CHEBI:58343"/>
        <dbReference type="ChEBI" id="CHEBI:456215"/>
        <dbReference type="EC" id="3.1.3.7"/>
    </reaction>
    <physiologicalReaction direction="left-to-right" evidence="2">
        <dbReference type="Rhea" id="RHEA:10041"/>
    </physiologicalReaction>
</comment>
<comment type="catalytic activity">
    <reaction evidence="2">
        <text>adenosine 2',5'-bisphosphate + H2O = AMP + phosphate</text>
        <dbReference type="Rhea" id="RHEA:77643"/>
        <dbReference type="ChEBI" id="CHEBI:15377"/>
        <dbReference type="ChEBI" id="CHEBI:43474"/>
        <dbReference type="ChEBI" id="CHEBI:194156"/>
        <dbReference type="ChEBI" id="CHEBI:456215"/>
        <dbReference type="EC" id="3.1.3.7"/>
    </reaction>
    <physiologicalReaction direction="left-to-right" evidence="2">
        <dbReference type="Rhea" id="RHEA:77644"/>
    </physiologicalReaction>
</comment>
<comment type="catalytic activity">
    <reaction evidence="2">
        <text>1D-myo-inositol 1,4-bisphosphate + H2O = 1D-myo-inositol 4-phosphate + phosphate</text>
        <dbReference type="Rhea" id="RHEA:15553"/>
        <dbReference type="ChEBI" id="CHEBI:15377"/>
        <dbReference type="ChEBI" id="CHEBI:43474"/>
        <dbReference type="ChEBI" id="CHEBI:58282"/>
        <dbReference type="ChEBI" id="CHEBI:58469"/>
        <dbReference type="EC" id="3.1.3.57"/>
    </reaction>
    <physiologicalReaction direction="left-to-right" evidence="2">
        <dbReference type="Rhea" id="RHEA:15554"/>
    </physiologicalReaction>
</comment>
<comment type="catalytic activity">
    <reaction evidence="2">
        <text>1D-myo-inositol 1,3,4-trisphosphate + H2O = 1D-myo-inositol 3,4-bisphosphate + phosphate</text>
        <dbReference type="Rhea" id="RHEA:70319"/>
        <dbReference type="ChEBI" id="CHEBI:15377"/>
        <dbReference type="ChEBI" id="CHEBI:43474"/>
        <dbReference type="ChEBI" id="CHEBI:58414"/>
        <dbReference type="ChEBI" id="CHEBI:83241"/>
    </reaction>
    <physiologicalReaction direction="left-to-right" evidence="2">
        <dbReference type="Rhea" id="RHEA:70320"/>
    </physiologicalReaction>
</comment>
<comment type="cofactor">
    <cofactor evidence="2">
        <name>Mg(2+)</name>
        <dbReference type="ChEBI" id="CHEBI:18420"/>
    </cofactor>
</comment>
<comment type="pathway">
    <text>Signal transduction; phosphatidylinositol signaling pathway.</text>
</comment>
<comment type="similarity">
    <text evidence="3">Belongs to the inositol monophosphatase superfamily.</text>
</comment>
<comment type="sequence caution" evidence="3">
    <conflict type="erroneous gene model prediction">
        <sequence resource="EMBL-CDS" id="CAC05455"/>
    </conflict>
</comment>
<accession>Q84VY5</accession>
<accession>Q9FY86</accession>
<protein>
    <recommendedName>
        <fullName>Probable 3'(2'),5'-bisphosphate nucleotidase 4</fullName>
        <ecNumber evidence="2">3.1.3.7</ecNumber>
    </recommendedName>
    <alternativeName>
        <fullName>3'(2'),5'-bisphosphonucleoside 3'(2')-phosphohydrolase 4</fullName>
    </alternativeName>
    <alternativeName>
        <fullName>DPNPase 4</fullName>
    </alternativeName>
    <alternativeName>
        <fullName>Inositol polyphosphate 1-phosphatase 4</fullName>
        <shortName>IPPase 4</shortName>
    </alternativeName>
    <alternativeName>
        <fullName>Inositol-1,4-bisphosphate 1-phosphatase 4</fullName>
        <ecNumber evidence="2">3.1.3.57</ecNumber>
    </alternativeName>
    <alternativeName>
        <fullName>Phosphatase SAL4</fullName>
    </alternativeName>
</protein>
<dbReference type="EC" id="3.1.3.7" evidence="2"/>
<dbReference type="EC" id="3.1.3.57" evidence="2"/>
<dbReference type="EMBL" id="AL391712">
    <property type="protein sequence ID" value="CAC05455.1"/>
    <property type="status" value="ALT_SEQ"/>
    <property type="molecule type" value="Genomic_DNA"/>
</dbReference>
<dbReference type="EMBL" id="CP002688">
    <property type="protein sequence ID" value="AED91370.1"/>
    <property type="molecule type" value="Genomic_DNA"/>
</dbReference>
<dbReference type="EMBL" id="BT004622">
    <property type="protein sequence ID" value="AAO42868.1"/>
    <property type="molecule type" value="mRNA"/>
</dbReference>
<dbReference type="RefSeq" id="NP_196491.2">
    <property type="nucleotide sequence ID" value="NM_120965.6"/>
</dbReference>
<dbReference type="SMR" id="Q84VY5"/>
<dbReference type="FunCoup" id="Q84VY5">
    <property type="interactions" value="277"/>
</dbReference>
<dbReference type="STRING" id="3702.Q84VY5"/>
<dbReference type="PaxDb" id="3702-AT5G09290.1"/>
<dbReference type="ProteomicsDB" id="220404"/>
<dbReference type="EnsemblPlants" id="AT5G09290.1">
    <property type="protein sequence ID" value="AT5G09290.1"/>
    <property type="gene ID" value="AT5G09290"/>
</dbReference>
<dbReference type="GeneID" id="830788"/>
<dbReference type="Gramene" id="AT5G09290.1">
    <property type="protein sequence ID" value="AT5G09290.1"/>
    <property type="gene ID" value="AT5G09290"/>
</dbReference>
<dbReference type="KEGG" id="ath:AT5G09290"/>
<dbReference type="Araport" id="AT5G09290"/>
<dbReference type="TAIR" id="AT5G09290"/>
<dbReference type="eggNOG" id="KOG1528">
    <property type="taxonomic scope" value="Eukaryota"/>
</dbReference>
<dbReference type="HOGENOM" id="CLU_033446_2_1_1"/>
<dbReference type="InParanoid" id="Q84VY5"/>
<dbReference type="OMA" id="WNHAAGA"/>
<dbReference type="OrthoDB" id="411145at2759"/>
<dbReference type="PhylomeDB" id="Q84VY5"/>
<dbReference type="BioCyc" id="ARA:AT5G09290-MONOMER"/>
<dbReference type="UniPathway" id="UPA00944"/>
<dbReference type="PRO" id="PR:Q84VY5"/>
<dbReference type="Proteomes" id="UP000006548">
    <property type="component" value="Chromosome 5"/>
</dbReference>
<dbReference type="ExpressionAtlas" id="Q84VY5">
    <property type="expression patterns" value="baseline and differential"/>
</dbReference>
<dbReference type="GO" id="GO:0008441">
    <property type="term" value="F:3'(2'),5'-bisphosphate nucleotidase activity"/>
    <property type="evidence" value="ECO:0007669"/>
    <property type="project" value="UniProtKB-EC"/>
</dbReference>
<dbReference type="GO" id="GO:0004441">
    <property type="term" value="F:inositol-1,4-bisphosphate 1-phosphatase activity"/>
    <property type="evidence" value="ECO:0007669"/>
    <property type="project" value="UniProtKB-EC"/>
</dbReference>
<dbReference type="GO" id="GO:0046872">
    <property type="term" value="F:metal ion binding"/>
    <property type="evidence" value="ECO:0007669"/>
    <property type="project" value="UniProtKB-KW"/>
</dbReference>
<dbReference type="GO" id="GO:0006790">
    <property type="term" value="P:sulfur compound metabolic process"/>
    <property type="evidence" value="ECO:0007669"/>
    <property type="project" value="InterPro"/>
</dbReference>
<dbReference type="CDD" id="cd01517">
    <property type="entry name" value="PAP_phosphatase"/>
    <property type="match status" value="1"/>
</dbReference>
<dbReference type="FunFam" id="3.40.190.80:FF:000003">
    <property type="entry name" value="PAP-specific phosphatase HAL2-like"/>
    <property type="match status" value="1"/>
</dbReference>
<dbReference type="FunFam" id="3.30.540.10:FF:000016">
    <property type="entry name" value="SAL1 phosphatase"/>
    <property type="match status" value="1"/>
</dbReference>
<dbReference type="Gene3D" id="3.40.190.80">
    <property type="match status" value="1"/>
</dbReference>
<dbReference type="Gene3D" id="3.30.540.10">
    <property type="entry name" value="Fructose-1,6-Bisphosphatase, subunit A, domain 1"/>
    <property type="match status" value="1"/>
</dbReference>
<dbReference type="InterPro" id="IPR006239">
    <property type="entry name" value="DPNP"/>
</dbReference>
<dbReference type="InterPro" id="IPR020583">
    <property type="entry name" value="Inositol_monoP_metal-BS"/>
</dbReference>
<dbReference type="InterPro" id="IPR051090">
    <property type="entry name" value="Inositol_monoP_superfamily"/>
</dbReference>
<dbReference type="InterPro" id="IPR000760">
    <property type="entry name" value="Inositol_monophosphatase-like"/>
</dbReference>
<dbReference type="NCBIfam" id="TIGR01330">
    <property type="entry name" value="bisphos_HAL2"/>
    <property type="match status" value="1"/>
</dbReference>
<dbReference type="PANTHER" id="PTHR43200">
    <property type="entry name" value="PHOSPHATASE"/>
    <property type="match status" value="1"/>
</dbReference>
<dbReference type="PANTHER" id="PTHR43200:SF11">
    <property type="entry name" value="SAL2 PHOSPHATASE-RELATED"/>
    <property type="match status" value="1"/>
</dbReference>
<dbReference type="Pfam" id="PF00459">
    <property type="entry name" value="Inositol_P"/>
    <property type="match status" value="1"/>
</dbReference>
<dbReference type="SUPFAM" id="SSF56655">
    <property type="entry name" value="Carbohydrate phosphatase"/>
    <property type="match status" value="1"/>
</dbReference>
<dbReference type="PROSITE" id="PS00629">
    <property type="entry name" value="IMP_1"/>
    <property type="match status" value="1"/>
</dbReference>
<gene>
    <name type="primary">SAL4</name>
    <name type="ordered locus">At5g09290</name>
    <name type="ORF">T5E8_90</name>
</gene>
<name>DPNP4_ARATH</name>
<evidence type="ECO:0000250" key="1">
    <source>
        <dbReference type="UniProtKB" id="P32179"/>
    </source>
</evidence>
<evidence type="ECO:0000250" key="2">
    <source>
        <dbReference type="UniProtKB" id="Q42546"/>
    </source>
</evidence>
<evidence type="ECO:0000305" key="3"/>